<comment type="similarity">
    <text evidence="1">Belongs to the bacterial ribosomal protein bL28 family.</text>
</comment>
<sequence length="92" mass="10317">MARKCEITGKKTMFGNNVPRKGLAKKKGGARQHIGVKTKRTFKVNLINKKFFIPDLGRSINIKVSANALRSISKIGLDAFLKKNCKKIENFL</sequence>
<protein>
    <recommendedName>
        <fullName evidence="1">Large ribosomal subunit protein bL28</fullName>
    </recommendedName>
    <alternativeName>
        <fullName evidence="2">50S ribosomal protein L28</fullName>
    </alternativeName>
</protein>
<keyword id="KW-0687">Ribonucleoprotein</keyword>
<keyword id="KW-0689">Ribosomal protein</keyword>
<feature type="chain" id="PRO_1000007179" description="Large ribosomal subunit protein bL28">
    <location>
        <begin position="1"/>
        <end position="92"/>
    </location>
</feature>
<feature type="sequence conflict" description="In Ref. 2; AEL69576." evidence="2" ref="2">
    <original>R</original>
    <variation>G</variation>
    <location>
        <position position="31"/>
    </location>
</feature>
<gene>
    <name evidence="1" type="primary">rpmB</name>
    <name type="ordered locus">BAPKO_0359</name>
    <name type="ordered locus">BafPKo_0350</name>
</gene>
<proteinExistence type="inferred from homology"/>
<name>RL28_BORAP</name>
<organism>
    <name type="scientific">Borreliella afzelii (strain PKo)</name>
    <name type="common">Borrelia afzelii</name>
    <dbReference type="NCBI Taxonomy" id="390236"/>
    <lineage>
        <taxon>Bacteria</taxon>
        <taxon>Pseudomonadati</taxon>
        <taxon>Spirochaetota</taxon>
        <taxon>Spirochaetia</taxon>
        <taxon>Spirochaetales</taxon>
        <taxon>Borreliaceae</taxon>
        <taxon>Borreliella</taxon>
    </lineage>
</organism>
<dbReference type="EMBL" id="CP000395">
    <property type="protein sequence ID" value="ABH01616.1"/>
    <property type="molecule type" value="Genomic_DNA"/>
</dbReference>
<dbReference type="EMBL" id="CP002933">
    <property type="protein sequence ID" value="AEL69576.1"/>
    <property type="molecule type" value="Genomic_DNA"/>
</dbReference>
<dbReference type="RefSeq" id="WP_011600968.1">
    <property type="nucleotide sequence ID" value="NC_008277.1"/>
</dbReference>
<dbReference type="SMR" id="Q0SNG2"/>
<dbReference type="STRING" id="29518.BLA32_02560"/>
<dbReference type="KEGG" id="baf:BAPKO_0359"/>
<dbReference type="KEGG" id="bafz:BafPKo_0350"/>
<dbReference type="PATRIC" id="fig|390236.22.peg.343"/>
<dbReference type="eggNOG" id="COG0227">
    <property type="taxonomic scope" value="Bacteria"/>
</dbReference>
<dbReference type="HOGENOM" id="CLU_064548_3_2_12"/>
<dbReference type="OrthoDB" id="9805609at2"/>
<dbReference type="Proteomes" id="UP000005216">
    <property type="component" value="Chromosome"/>
</dbReference>
<dbReference type="GO" id="GO:1990904">
    <property type="term" value="C:ribonucleoprotein complex"/>
    <property type="evidence" value="ECO:0007669"/>
    <property type="project" value="UniProtKB-KW"/>
</dbReference>
<dbReference type="GO" id="GO:0005840">
    <property type="term" value="C:ribosome"/>
    <property type="evidence" value="ECO:0007669"/>
    <property type="project" value="UniProtKB-KW"/>
</dbReference>
<dbReference type="GO" id="GO:0003735">
    <property type="term" value="F:structural constituent of ribosome"/>
    <property type="evidence" value="ECO:0007669"/>
    <property type="project" value="InterPro"/>
</dbReference>
<dbReference type="GO" id="GO:0006412">
    <property type="term" value="P:translation"/>
    <property type="evidence" value="ECO:0007669"/>
    <property type="project" value="UniProtKB-UniRule"/>
</dbReference>
<dbReference type="Gene3D" id="2.30.170.40">
    <property type="entry name" value="Ribosomal protein L28/L24"/>
    <property type="match status" value="1"/>
</dbReference>
<dbReference type="HAMAP" id="MF_00373">
    <property type="entry name" value="Ribosomal_bL28"/>
    <property type="match status" value="1"/>
</dbReference>
<dbReference type="InterPro" id="IPR026569">
    <property type="entry name" value="Ribosomal_bL28"/>
</dbReference>
<dbReference type="InterPro" id="IPR034704">
    <property type="entry name" value="Ribosomal_bL28/bL31-like_sf"/>
</dbReference>
<dbReference type="InterPro" id="IPR001383">
    <property type="entry name" value="Ribosomal_bL28_bact-type"/>
</dbReference>
<dbReference type="InterPro" id="IPR037147">
    <property type="entry name" value="Ribosomal_bL28_sf"/>
</dbReference>
<dbReference type="NCBIfam" id="TIGR00009">
    <property type="entry name" value="L28"/>
    <property type="match status" value="1"/>
</dbReference>
<dbReference type="PANTHER" id="PTHR13528">
    <property type="entry name" value="39S RIBOSOMAL PROTEIN L28, MITOCHONDRIAL"/>
    <property type="match status" value="1"/>
</dbReference>
<dbReference type="PANTHER" id="PTHR13528:SF2">
    <property type="entry name" value="LARGE RIBOSOMAL SUBUNIT PROTEIN BL28M"/>
    <property type="match status" value="1"/>
</dbReference>
<dbReference type="Pfam" id="PF00830">
    <property type="entry name" value="Ribosomal_L28"/>
    <property type="match status" value="1"/>
</dbReference>
<dbReference type="SUPFAM" id="SSF143800">
    <property type="entry name" value="L28p-like"/>
    <property type="match status" value="1"/>
</dbReference>
<evidence type="ECO:0000255" key="1">
    <source>
        <dbReference type="HAMAP-Rule" id="MF_00373"/>
    </source>
</evidence>
<evidence type="ECO:0000305" key="2"/>
<accession>Q0SNG2</accession>
<accession>G0IRR6</accession>
<reference key="1">
    <citation type="journal article" date="2006" name="BMC Genomics">
        <title>Comparative genome analysis: selection pressure on the Borrelia vls cassettes is essential for infectivity.</title>
        <authorList>
            <person name="Gloeckner G."/>
            <person name="Schulte-Spechtel U."/>
            <person name="Schilhabel M."/>
            <person name="Felder M."/>
            <person name="Suehnel J."/>
            <person name="Wilske B."/>
            <person name="Platzer M."/>
        </authorList>
    </citation>
    <scope>NUCLEOTIDE SEQUENCE [LARGE SCALE GENOMIC DNA]</scope>
    <source>
        <strain>PKo</strain>
    </source>
</reference>
<reference key="2">
    <citation type="journal article" date="2011" name="J. Bacteriol.">
        <title>Whole-genome sequences of two Borrelia afzelii and two Borrelia garinii Lyme disease agent isolates.</title>
        <authorList>
            <person name="Casjens S.R."/>
            <person name="Mongodin E.F."/>
            <person name="Qiu W.G."/>
            <person name="Dunn J.J."/>
            <person name="Luft B.J."/>
            <person name="Fraser-Liggett C.M."/>
            <person name="Schutzer S.E."/>
        </authorList>
    </citation>
    <scope>NUCLEOTIDE SEQUENCE [LARGE SCALE GENOMIC DNA]</scope>
    <source>
        <strain>PKo</strain>
    </source>
</reference>